<protein>
    <recommendedName>
        <fullName evidence="6">C-type lectin mosGCTL-7</fullName>
    </recommendedName>
    <alternativeName>
        <fullName evidence="5">Mosquito galactose-specific C-type lectin 7</fullName>
        <shortName evidence="5">mosGCTL-7</shortName>
    </alternativeName>
</protein>
<proteinExistence type="evidence at protein level"/>
<organism evidence="7">
    <name type="scientific">Aedes aegypti</name>
    <name type="common">Yellowfever mosquito</name>
    <name type="synonym">Culex aegypti</name>
    <dbReference type="NCBI Taxonomy" id="7159"/>
    <lineage>
        <taxon>Eukaryota</taxon>
        <taxon>Metazoa</taxon>
        <taxon>Ecdysozoa</taxon>
        <taxon>Arthropoda</taxon>
        <taxon>Hexapoda</taxon>
        <taxon>Insecta</taxon>
        <taxon>Pterygota</taxon>
        <taxon>Neoptera</taxon>
        <taxon>Endopterygota</taxon>
        <taxon>Diptera</taxon>
        <taxon>Nematocera</taxon>
        <taxon>Culicoidea</taxon>
        <taxon>Culicidae</taxon>
        <taxon>Culicinae</taxon>
        <taxon>Aedini</taxon>
        <taxon>Aedes</taxon>
        <taxon>Stegomyia</taxon>
    </lineage>
</organism>
<keyword id="KW-1015">Disulfide bond</keyword>
<keyword id="KW-0325">Glycoprotein</keyword>
<keyword id="KW-0945">Host-virus interaction</keyword>
<keyword id="KW-0430">Lectin</keyword>
<keyword id="KW-1185">Reference proteome</keyword>
<keyword id="KW-0964">Secreted</keyword>
<keyword id="KW-0732">Signal</keyword>
<evidence type="ECO:0000255" key="1"/>
<evidence type="ECO:0000255" key="2">
    <source>
        <dbReference type="PROSITE-ProRule" id="PRU00040"/>
    </source>
</evidence>
<evidence type="ECO:0000255" key="3">
    <source>
        <dbReference type="PROSITE-ProRule" id="PRU00498"/>
    </source>
</evidence>
<evidence type="ECO:0000269" key="4">
    <source>
    </source>
</evidence>
<evidence type="ECO:0000303" key="5">
    <source>
    </source>
</evidence>
<evidence type="ECO:0000305" key="6"/>
<evidence type="ECO:0000312" key="7">
    <source>
        <dbReference type="Proteomes" id="UP000008820"/>
    </source>
</evidence>
<accession>A0A1S4F1Z7</accession>
<sequence length="150" mass="17477">MQLVHVLVVLLSVVAHAKKFFIPNLKANWHKAHEFCISLDMNMVSVESPKDHDELVQFVRKTDKFSNATRFWLGASDLAEEGVYTWVSSSRLMTFTNWAENEPSSTEAENCVEMIHNTYVNRIWTWNDIDCRGFKAYIVCEERQSIAQFR</sequence>
<name>GCTL7_AEDAE</name>
<reference evidence="7" key="1">
    <citation type="journal article" date="2018" name="Nature">
        <title>Improved reference genome of Aedes aegypti informs arbovirus vector control.</title>
        <authorList>
            <person name="Matthews B.J."/>
            <person name="Dudchenko O."/>
            <person name="Kingan S.B."/>
            <person name="Koren S."/>
            <person name="Antoshechkin I."/>
            <person name="Crawford J.E."/>
            <person name="Glassford W.J."/>
            <person name="Herre M."/>
            <person name="Redmond S.N."/>
            <person name="Rose N.H."/>
            <person name="Weedall G.D."/>
            <person name="Wu Y."/>
            <person name="Batra S.S."/>
            <person name="Brito-Sierra C.A."/>
            <person name="Buckingham S.D."/>
            <person name="Campbell C.L."/>
            <person name="Chan S."/>
            <person name="Cox E."/>
            <person name="Evans B.R."/>
            <person name="Fansiri T."/>
            <person name="Filipovic I."/>
            <person name="Fontaine A."/>
            <person name="Gloria-Soria A."/>
            <person name="Hall R."/>
            <person name="Joardar V.S."/>
            <person name="Jones A.K."/>
            <person name="Kay R.G.G."/>
            <person name="Kodali V.K."/>
            <person name="Lee J."/>
            <person name="Lycett G.J."/>
            <person name="Mitchell S.N."/>
            <person name="Muehling J."/>
            <person name="Murphy M.R."/>
            <person name="Omer A.D."/>
            <person name="Partridge F.A."/>
            <person name="Peluso P."/>
            <person name="Aiden A.P."/>
            <person name="Ramasamy V."/>
            <person name="Rasic G."/>
            <person name="Roy S."/>
            <person name="Saavedra-Rodriguez K."/>
            <person name="Sharan S."/>
            <person name="Sharma A."/>
            <person name="Smith M.L."/>
            <person name="Turner J."/>
            <person name="Weakley A.M."/>
            <person name="Zhao Z."/>
            <person name="Akbari O.S."/>
            <person name="Black W.C. IV"/>
            <person name="Cao H."/>
            <person name="Darby A.C."/>
            <person name="Hill C.A."/>
            <person name="Johnston J.S."/>
            <person name="Murphy T.D."/>
            <person name="Raikhel A.S."/>
            <person name="Sattelle D.B."/>
            <person name="Sharakhov I.V."/>
            <person name="White B.J."/>
            <person name="Zhao L."/>
            <person name="Aiden E.L."/>
            <person name="Mann R.S."/>
            <person name="Lambrechts L."/>
            <person name="Powell J.R."/>
            <person name="Sharakhova M.V."/>
            <person name="Tu Z."/>
            <person name="Robertson H.M."/>
            <person name="McBride C.S."/>
            <person name="Hastie A.R."/>
            <person name="Korlach J."/>
            <person name="Neafsey D.E."/>
            <person name="Phillippy A.M."/>
            <person name="Vosshall L.B."/>
        </authorList>
    </citation>
    <scope>NUCLEOTIDE SEQUENCE [LARGE SCALE GENOMIC DNA]</scope>
    <source>
        <strain evidence="7">LVP_AGWG</strain>
    </source>
</reference>
<reference evidence="6" key="2">
    <citation type="journal article" date="2017" name="J. Virol.">
        <title>mosGCTL-7, a C-Type Lectin Protein, Mediates Japanese Encephalitis Virus Infection in Mosquitoes.</title>
        <authorList>
            <person name="Liu K."/>
            <person name="Qian Y."/>
            <person name="Jung Y.S."/>
            <person name="Zhou B."/>
            <person name="Cao R."/>
            <person name="Shen T."/>
            <person name="Shao D."/>
            <person name="Wei J."/>
            <person name="Ma Z."/>
            <person name="Chen P."/>
            <person name="Zhu H."/>
            <person name="Qiu Y."/>
        </authorList>
    </citation>
    <scope>FUNCTION</scope>
    <scope>FUNCTION (MICROBIAL INFECTION)</scope>
    <scope>INTERACTION WITH RECEPTOR-TYPE TYROSINE-PROTEIN PHOSPHATASE MOSPTP-1</scope>
    <scope>INTERACTION WITH ENVELOPE PROTEIN E OF JAPANESE ENCEPHALITIS VIRUS</scope>
    <scope>INDUCTION (MICROBIAL INFECTION)</scope>
    <scope>DISRUPTION PHENOTYPE (MICROBIAL INFECTION)</scope>
</reference>
<dbReference type="RefSeq" id="XP_001655474.2">
    <property type="nucleotide sequence ID" value="XM_001655424.3"/>
</dbReference>
<dbReference type="SMR" id="A0A1S4F1Z7"/>
<dbReference type="FunCoup" id="A0A1S4F1Z7">
    <property type="interactions" value="23"/>
</dbReference>
<dbReference type="EnsemblMetazoa" id="AAEL002524-RA">
    <property type="protein sequence ID" value="AAEL002524-PA"/>
    <property type="gene ID" value="AAEL002524"/>
</dbReference>
<dbReference type="GeneID" id="5575000"/>
<dbReference type="VEuPathDB" id="VectorBase:AAEL002524"/>
<dbReference type="InParanoid" id="A0A1S4F1Z7"/>
<dbReference type="OrthoDB" id="7755331at2759"/>
<dbReference type="Proteomes" id="UP000008820">
    <property type="component" value="Chromosome 1"/>
</dbReference>
<dbReference type="GO" id="GO:0005576">
    <property type="term" value="C:extracellular region"/>
    <property type="evidence" value="ECO:0007669"/>
    <property type="project" value="UniProtKB-SubCell"/>
</dbReference>
<dbReference type="GO" id="GO:0030246">
    <property type="term" value="F:carbohydrate binding"/>
    <property type="evidence" value="ECO:0007669"/>
    <property type="project" value="UniProtKB-KW"/>
</dbReference>
<dbReference type="CDD" id="cd00037">
    <property type="entry name" value="CLECT"/>
    <property type="match status" value="1"/>
</dbReference>
<dbReference type="Gene3D" id="3.10.100.10">
    <property type="entry name" value="Mannose-Binding Protein A, subunit A"/>
    <property type="match status" value="1"/>
</dbReference>
<dbReference type="InterPro" id="IPR001304">
    <property type="entry name" value="C-type_lectin-like"/>
</dbReference>
<dbReference type="InterPro" id="IPR016186">
    <property type="entry name" value="C-type_lectin-like/link_sf"/>
</dbReference>
<dbReference type="InterPro" id="IPR050111">
    <property type="entry name" value="C-type_lectin/snaclec_domain"/>
</dbReference>
<dbReference type="InterPro" id="IPR016187">
    <property type="entry name" value="CTDL_fold"/>
</dbReference>
<dbReference type="PANTHER" id="PTHR22803">
    <property type="entry name" value="MANNOSE, PHOSPHOLIPASE, LECTIN RECEPTOR RELATED"/>
    <property type="match status" value="1"/>
</dbReference>
<dbReference type="Pfam" id="PF00059">
    <property type="entry name" value="Lectin_C"/>
    <property type="match status" value="1"/>
</dbReference>
<dbReference type="SMART" id="SM00034">
    <property type="entry name" value="CLECT"/>
    <property type="match status" value="1"/>
</dbReference>
<dbReference type="SUPFAM" id="SSF56436">
    <property type="entry name" value="C-type lectin-like"/>
    <property type="match status" value="1"/>
</dbReference>
<dbReference type="PROSITE" id="PS50041">
    <property type="entry name" value="C_TYPE_LECTIN_2"/>
    <property type="match status" value="1"/>
</dbReference>
<comment type="function">
    <text evidence="4">Carbohydrate-binding protein.</text>
</comment>
<comment type="function">
    <text evidence="4">(Microbial infection) Facilitates Japanese encephalitis virus infection in mosquitoes probably via capturing viral particles and presenting them to a ligand on the cell surface, thereby facilitating viral entry.</text>
</comment>
<comment type="subunit">
    <text evidence="4">Interacts with putative receptor-type tyrosine-protein phosphatase mosPTP-1; the interaction probably mediates the recruitment of Japanese encephalitis virus particles in complex with C-type lectin mosGCTL-7 to the cell surface.</text>
</comment>
<comment type="subunit">
    <text evidence="4">(Microbial infection) Interacts with envelope protein E (glycosylated) of Japanese encephalitis virus in a calcium-dependent manner.</text>
</comment>
<comment type="subcellular location">
    <subcellularLocation>
        <location evidence="6">Secreted</location>
    </subcellularLocation>
</comment>
<comment type="induction">
    <text evidence="4">(Microbial infection) Up-regulated in salivary gland following infection with Japanese encephalitis virus (at protein level) (PubMed:28250133). Up-regulated in hemolymph following infection with Japanese encephalitis virus (PubMed:28250133).</text>
</comment>
<comment type="disruption phenotype">
    <text evidence="4">(Microbial infection) RNAi-mediated knockdown results in reduced Japanese encephalitis virus infection levels.</text>
</comment>
<comment type="miscellaneous">
    <text evidence="4">Antibodies against the protein added to infectious blood meal block the interaction between mosGCTL-7 and envelope protein E of Japanese encephalitis virus and reduce Japanese encephalitis virus infection after feeding.</text>
</comment>
<feature type="signal peptide" evidence="1">
    <location>
        <begin position="1"/>
        <end position="17"/>
    </location>
</feature>
<feature type="chain" id="PRO_0000461388" description="C-type lectin mosGCTL-7" evidence="1">
    <location>
        <begin position="18"/>
        <end position="150"/>
    </location>
</feature>
<feature type="domain" description="C-type lectin" evidence="2">
    <location>
        <begin position="18"/>
        <end position="140"/>
    </location>
</feature>
<feature type="glycosylation site" description="N-linked (GlcNAc...) asparagine" evidence="3">
    <location>
        <position position="67"/>
    </location>
</feature>
<feature type="disulfide bond" evidence="2">
    <location>
        <begin position="111"/>
        <end position="131"/>
    </location>
</feature>